<keyword id="KW-0488">Methylation</keyword>
<keyword id="KW-1185">Reference proteome</keyword>
<keyword id="KW-0687">Ribonucleoprotein</keyword>
<keyword id="KW-0689">Ribosomal protein</keyword>
<keyword id="KW-0694">RNA-binding</keyword>
<keyword id="KW-0699">rRNA-binding</keyword>
<keyword id="KW-0820">tRNA-binding</keyword>
<comment type="function">
    <text evidence="2">With S4 and S5 plays an important role in translational accuracy.</text>
</comment>
<comment type="function">
    <text evidence="2">Interacts with and stabilizes bases of the 16S rRNA that are involved in tRNA selection in the A site and with the mRNA backbone. Located at the interface of the 30S and 50S subunits, it traverses the body of the 30S subunit contacting proteins on the other side and probably holding the rRNA structure together. The combined cluster of proteins S8, S12 and S17 appears to hold together the shoulder and platform of the 30S subunit.</text>
</comment>
<comment type="subunit">
    <text evidence="2">Part of the 30S ribosomal subunit. Contacts proteins S8 and S17. May interact with IF1 in the 30S initiation complex.</text>
</comment>
<comment type="similarity">
    <text evidence="2">Belongs to the universal ribosomal protein uS12 family.</text>
</comment>
<protein>
    <recommendedName>
        <fullName evidence="2">Small ribosomal subunit protein uS12</fullName>
    </recommendedName>
    <alternativeName>
        <fullName evidence="4">30S ribosomal protein S12</fullName>
    </alternativeName>
</protein>
<gene>
    <name evidence="2" type="primary">rpsL</name>
    <name type="ordered locus">PST_0779</name>
</gene>
<evidence type="ECO:0000250" key="1"/>
<evidence type="ECO:0000255" key="2">
    <source>
        <dbReference type="HAMAP-Rule" id="MF_00403"/>
    </source>
</evidence>
<evidence type="ECO:0000256" key="3">
    <source>
        <dbReference type="SAM" id="MobiDB-lite"/>
    </source>
</evidence>
<evidence type="ECO:0000305" key="4"/>
<organism>
    <name type="scientific">Stutzerimonas stutzeri (strain A1501)</name>
    <name type="common">Pseudomonas stutzeri</name>
    <dbReference type="NCBI Taxonomy" id="379731"/>
    <lineage>
        <taxon>Bacteria</taxon>
        <taxon>Pseudomonadati</taxon>
        <taxon>Pseudomonadota</taxon>
        <taxon>Gammaproteobacteria</taxon>
        <taxon>Pseudomonadales</taxon>
        <taxon>Pseudomonadaceae</taxon>
        <taxon>Stutzerimonas</taxon>
    </lineage>
</organism>
<accession>A4VHM5</accession>
<reference key="1">
    <citation type="journal article" date="2008" name="Proc. Natl. Acad. Sci. U.S.A.">
        <title>Nitrogen fixation island and rhizosphere competence traits in the genome of root-associated Pseudomonas stutzeri A1501.</title>
        <authorList>
            <person name="Yan Y."/>
            <person name="Yang J."/>
            <person name="Dou Y."/>
            <person name="Chen M."/>
            <person name="Ping S."/>
            <person name="Peng J."/>
            <person name="Lu W."/>
            <person name="Zhang W."/>
            <person name="Yao Z."/>
            <person name="Li H."/>
            <person name="Liu W."/>
            <person name="He S."/>
            <person name="Geng L."/>
            <person name="Zhang X."/>
            <person name="Yang F."/>
            <person name="Yu H."/>
            <person name="Zhan Y."/>
            <person name="Li D."/>
            <person name="Lin Z."/>
            <person name="Wang Y."/>
            <person name="Elmerich C."/>
            <person name="Lin M."/>
            <person name="Jin Q."/>
        </authorList>
    </citation>
    <scope>NUCLEOTIDE SEQUENCE [LARGE SCALE GENOMIC DNA]</scope>
    <source>
        <strain>A1501</strain>
    </source>
</reference>
<proteinExistence type="inferred from homology"/>
<dbReference type="EMBL" id="CP000304">
    <property type="protein sequence ID" value="ABP78476.1"/>
    <property type="molecule type" value="Genomic_DNA"/>
</dbReference>
<dbReference type="RefSeq" id="WP_011911983.1">
    <property type="nucleotide sequence ID" value="NC_009434.1"/>
</dbReference>
<dbReference type="SMR" id="A4VHM5"/>
<dbReference type="KEGG" id="psa:PST_0779"/>
<dbReference type="eggNOG" id="COG0048">
    <property type="taxonomic scope" value="Bacteria"/>
</dbReference>
<dbReference type="HOGENOM" id="CLU_104295_1_2_6"/>
<dbReference type="Proteomes" id="UP000000233">
    <property type="component" value="Chromosome"/>
</dbReference>
<dbReference type="GO" id="GO:0015935">
    <property type="term" value="C:small ribosomal subunit"/>
    <property type="evidence" value="ECO:0007669"/>
    <property type="project" value="InterPro"/>
</dbReference>
<dbReference type="GO" id="GO:0019843">
    <property type="term" value="F:rRNA binding"/>
    <property type="evidence" value="ECO:0007669"/>
    <property type="project" value="UniProtKB-UniRule"/>
</dbReference>
<dbReference type="GO" id="GO:0003735">
    <property type="term" value="F:structural constituent of ribosome"/>
    <property type="evidence" value="ECO:0007669"/>
    <property type="project" value="InterPro"/>
</dbReference>
<dbReference type="GO" id="GO:0000049">
    <property type="term" value="F:tRNA binding"/>
    <property type="evidence" value="ECO:0007669"/>
    <property type="project" value="UniProtKB-UniRule"/>
</dbReference>
<dbReference type="GO" id="GO:0006412">
    <property type="term" value="P:translation"/>
    <property type="evidence" value="ECO:0007669"/>
    <property type="project" value="UniProtKB-UniRule"/>
</dbReference>
<dbReference type="CDD" id="cd03368">
    <property type="entry name" value="Ribosomal_S12"/>
    <property type="match status" value="1"/>
</dbReference>
<dbReference type="FunFam" id="2.40.50.140:FF:000001">
    <property type="entry name" value="30S ribosomal protein S12"/>
    <property type="match status" value="1"/>
</dbReference>
<dbReference type="Gene3D" id="2.40.50.140">
    <property type="entry name" value="Nucleic acid-binding proteins"/>
    <property type="match status" value="1"/>
</dbReference>
<dbReference type="HAMAP" id="MF_00403_B">
    <property type="entry name" value="Ribosomal_uS12_B"/>
    <property type="match status" value="1"/>
</dbReference>
<dbReference type="InterPro" id="IPR012340">
    <property type="entry name" value="NA-bd_OB-fold"/>
</dbReference>
<dbReference type="InterPro" id="IPR006032">
    <property type="entry name" value="Ribosomal_uS12"/>
</dbReference>
<dbReference type="InterPro" id="IPR005679">
    <property type="entry name" value="Ribosomal_uS12_bac"/>
</dbReference>
<dbReference type="NCBIfam" id="TIGR00981">
    <property type="entry name" value="rpsL_bact"/>
    <property type="match status" value="1"/>
</dbReference>
<dbReference type="PANTHER" id="PTHR11652">
    <property type="entry name" value="30S RIBOSOMAL PROTEIN S12 FAMILY MEMBER"/>
    <property type="match status" value="1"/>
</dbReference>
<dbReference type="Pfam" id="PF00164">
    <property type="entry name" value="Ribosom_S12_S23"/>
    <property type="match status" value="1"/>
</dbReference>
<dbReference type="PIRSF" id="PIRSF002133">
    <property type="entry name" value="Ribosomal_S12/S23"/>
    <property type="match status" value="1"/>
</dbReference>
<dbReference type="PRINTS" id="PR01034">
    <property type="entry name" value="RIBOSOMALS12"/>
</dbReference>
<dbReference type="SUPFAM" id="SSF50249">
    <property type="entry name" value="Nucleic acid-binding proteins"/>
    <property type="match status" value="1"/>
</dbReference>
<dbReference type="PROSITE" id="PS00055">
    <property type="entry name" value="RIBOSOMAL_S12"/>
    <property type="match status" value="1"/>
</dbReference>
<sequence>MATINQLVRQPRKRVVEKSDVPALQNCPQRRGVCTRVYTTTPKKPNSALRKVCRVRLTNGYEVASYIGGEGHNLQEHSVVLIRGGRVRDLPGVRYHTVRGSLDTSGVKDRKQGRSKYGAKRPK</sequence>
<name>RS12_STUS1</name>
<feature type="chain" id="PRO_0000296020" description="Small ribosomal subunit protein uS12">
    <location>
        <begin position="1"/>
        <end position="123"/>
    </location>
</feature>
<feature type="region of interest" description="Disordered" evidence="3">
    <location>
        <begin position="101"/>
        <end position="123"/>
    </location>
</feature>
<feature type="compositionally biased region" description="Basic residues" evidence="3">
    <location>
        <begin position="113"/>
        <end position="123"/>
    </location>
</feature>
<feature type="modified residue" description="3-methylthioaspartic acid" evidence="1">
    <location>
        <position position="89"/>
    </location>
</feature>